<comment type="function">
    <text evidence="1">Component of the cytosolic Fe/S protein assembly machinery. May play a role in the transfer of pre-assembled Fe/S clusters to target apoproteins (By similarity).</text>
</comment>
<comment type="similarity">
    <text evidence="3">Belongs to the NARF family.</text>
</comment>
<organism>
    <name type="scientific">Encephalitozoon cuniculi (strain GB-M1)</name>
    <name type="common">Microsporidian parasite</name>
    <dbReference type="NCBI Taxonomy" id="284813"/>
    <lineage>
        <taxon>Eukaryota</taxon>
        <taxon>Fungi</taxon>
        <taxon>Fungi incertae sedis</taxon>
        <taxon>Microsporidia</taxon>
        <taxon>Unikaryonidae</taxon>
        <taxon>Encephalitozoon</taxon>
    </lineage>
</organism>
<proteinExistence type="inferred from homology"/>
<dbReference type="EMBL" id="AL590445">
    <property type="protein sequence ID" value="CAD26617.2"/>
    <property type="molecule type" value="Genomic_DNA"/>
</dbReference>
<dbReference type="RefSeq" id="NP_597440.1">
    <property type="nucleotide sequence ID" value="NM_001041306.1"/>
</dbReference>
<dbReference type="SMR" id="Q8SVJ2"/>
<dbReference type="FunCoup" id="Q8SVJ2">
    <property type="interactions" value="22"/>
</dbReference>
<dbReference type="STRING" id="284813.Q8SVJ2"/>
<dbReference type="GeneID" id="859106"/>
<dbReference type="KEGG" id="ecu:ECU05_0970"/>
<dbReference type="VEuPathDB" id="MicrosporidiaDB:ECU05_0970"/>
<dbReference type="HOGENOM" id="CLU_683513_0_0_1"/>
<dbReference type="InParanoid" id="Q8SVJ2"/>
<dbReference type="OrthoDB" id="10253113at2759"/>
<dbReference type="Proteomes" id="UP000000819">
    <property type="component" value="Chromosome V"/>
</dbReference>
<dbReference type="GO" id="GO:0051539">
    <property type="term" value="F:4 iron, 4 sulfur cluster binding"/>
    <property type="evidence" value="ECO:0007669"/>
    <property type="project" value="UniProtKB-KW"/>
</dbReference>
<dbReference type="GO" id="GO:0051536">
    <property type="term" value="F:iron-sulfur cluster binding"/>
    <property type="evidence" value="ECO:0000250"/>
    <property type="project" value="UniProtKB"/>
</dbReference>
<dbReference type="GO" id="GO:0046872">
    <property type="term" value="F:metal ion binding"/>
    <property type="evidence" value="ECO:0007669"/>
    <property type="project" value="UniProtKB-KW"/>
</dbReference>
<dbReference type="GO" id="GO:0016226">
    <property type="term" value="P:iron-sulfur cluster assembly"/>
    <property type="evidence" value="ECO:0000250"/>
    <property type="project" value="UniProtKB"/>
</dbReference>
<dbReference type="Gene3D" id="3.30.70.20">
    <property type="match status" value="1"/>
</dbReference>
<dbReference type="Gene3D" id="3.40.50.1780">
    <property type="match status" value="1"/>
</dbReference>
<dbReference type="Gene3D" id="3.40.950.10">
    <property type="entry name" value="Fe-only Hydrogenase (Larger Subunit), Chain L, domain 3"/>
    <property type="match status" value="1"/>
</dbReference>
<dbReference type="InterPro" id="IPR050340">
    <property type="entry name" value="Cytosolic_Fe-S_CAF"/>
</dbReference>
<dbReference type="InterPro" id="IPR009016">
    <property type="entry name" value="Fe_hydrogenase"/>
</dbReference>
<dbReference type="InterPro" id="IPR004108">
    <property type="entry name" value="Fe_hydrogenase_lsu_C"/>
</dbReference>
<dbReference type="PANTHER" id="PTHR11615">
    <property type="entry name" value="NITRATE, FORMATE, IRON DEHYDROGENASE"/>
    <property type="match status" value="1"/>
</dbReference>
<dbReference type="Pfam" id="PF02906">
    <property type="entry name" value="Fe_hyd_lg_C"/>
    <property type="match status" value="1"/>
</dbReference>
<dbReference type="SUPFAM" id="SSF53920">
    <property type="entry name" value="Fe-only hydrogenase"/>
    <property type="match status" value="1"/>
</dbReference>
<feature type="chain" id="PRO_0000383729" description="Cytosolic Fe-S cluster assembly factor NAR1">
    <location>
        <begin position="1"/>
        <end position="357"/>
    </location>
</feature>
<feature type="binding site" evidence="2">
    <location>
        <position position="14"/>
    </location>
    <ligand>
        <name>[4Fe-4S] cluster</name>
        <dbReference type="ChEBI" id="CHEBI:49883"/>
        <label>1</label>
    </ligand>
</feature>
<feature type="binding site" evidence="2">
    <location>
        <position position="28"/>
    </location>
    <ligand>
        <name>[4Fe-4S] cluster</name>
        <dbReference type="ChEBI" id="CHEBI:49883"/>
        <label>1</label>
    </ligand>
</feature>
<feature type="binding site" evidence="2">
    <location>
        <position position="31"/>
    </location>
    <ligand>
        <name>[4Fe-4S] cluster</name>
        <dbReference type="ChEBI" id="CHEBI:49883"/>
        <label>1</label>
    </ligand>
</feature>
<feature type="binding site" evidence="2">
    <location>
        <position position="34"/>
    </location>
    <ligand>
        <name>[4Fe-4S] cluster</name>
        <dbReference type="ChEBI" id="CHEBI:49883"/>
        <label>1</label>
    </ligand>
</feature>
<feature type="binding site" evidence="2">
    <location>
        <position position="129"/>
    </location>
    <ligand>
        <name>[4Fe-4S] cluster</name>
        <dbReference type="ChEBI" id="CHEBI:49883"/>
        <label>2</label>
    </ligand>
</feature>
<feature type="binding site" evidence="2">
    <location>
        <position position="172"/>
    </location>
    <ligand>
        <name>[4Fe-4S] cluster</name>
        <dbReference type="ChEBI" id="CHEBI:49883"/>
        <label>2</label>
    </ligand>
</feature>
<feature type="binding site" evidence="2">
    <location>
        <position position="297"/>
    </location>
    <ligand>
        <name>[4Fe-4S] cluster</name>
        <dbReference type="ChEBI" id="CHEBI:49883"/>
        <label>2</label>
    </ligand>
</feature>
<feature type="binding site" evidence="2">
    <location>
        <position position="301"/>
    </location>
    <ligand>
        <name>[4Fe-4S] cluster</name>
        <dbReference type="ChEBI" id="CHEBI:49883"/>
        <label>2</label>
    </ligand>
</feature>
<keyword id="KW-0004">4Fe-4S</keyword>
<keyword id="KW-0408">Iron</keyword>
<keyword id="KW-0411">Iron-sulfur</keyword>
<keyword id="KW-0479">Metal-binding</keyword>
<keyword id="KW-1185">Reference proteome</keyword>
<accession>Q8SVJ2</accession>
<reference key="1">
    <citation type="journal article" date="2001" name="Nature">
        <title>Genome sequence and gene compaction of the eukaryote parasite Encephalitozoon cuniculi.</title>
        <authorList>
            <person name="Katinka M.D."/>
            <person name="Duprat S."/>
            <person name="Cornillot E."/>
            <person name="Metenier G."/>
            <person name="Thomarat F."/>
            <person name="Prensier G."/>
            <person name="Barbe V."/>
            <person name="Peyretaillade E."/>
            <person name="Brottier P."/>
            <person name="Wincker P."/>
            <person name="Delbac F."/>
            <person name="El Alaoui H."/>
            <person name="Peyret P."/>
            <person name="Saurin W."/>
            <person name="Gouy M."/>
            <person name="Weissenbach J."/>
            <person name="Vivares C.P."/>
        </authorList>
    </citation>
    <scope>NUCLEOTIDE SEQUENCE [LARGE SCALE GENOMIC DNA]</scope>
    <source>
        <strain>GB-M1</strain>
    </source>
</reference>
<reference key="2">
    <citation type="journal article" date="2009" name="BMC Genomics">
        <title>Identification of transcriptional signals in Encephalitozoon cuniculi widespread among Microsporidia phylum: support for accurate structural genome annotation.</title>
        <authorList>
            <person name="Peyretaillade E."/>
            <person name="Goncalves O."/>
            <person name="Terrat S."/>
            <person name="Dugat-Bony E."/>
            <person name="Wincker P."/>
            <person name="Cornman R.S."/>
            <person name="Evans J.D."/>
            <person name="Delbac F."/>
            <person name="Peyret P."/>
        </authorList>
    </citation>
    <scope>GENOME REANNOTATION</scope>
    <source>
        <strain>GB-M1</strain>
    </source>
</reference>
<sequence length="357" mass="40320">MSFFADLPKDNKKCIKIGSPLALSLSDCLACSGCVSADEAGALSEDLSFVLDLSPQTSFVLSPQSKINIFNLYREDGMEYREFEAVLSSFLRSKFNIHRIVDTSYLRSKIYEETYREYMATNHLIVSACPGVVTYIERTAPYLIGYLSRVKSPQQMAFSLVKGSRTVSVMPCQDKKLENGRDGVKFDFILTTRGFCKALDSLGFRRPARASGKSLCSMEEAETTQWNIGTSSGGYAEFILGKHCVVETREIRNGIKEHLLDDGRTISQITGLENSINYFKSSKTKGPRHKMTEIFLCKNGCIGGPGQERVNDVEMDIREYDRNGREQPRIFYSSPGLEEKRVFREVKAKRVDLRVDW</sequence>
<evidence type="ECO:0000250" key="1"/>
<evidence type="ECO:0000255" key="2"/>
<evidence type="ECO:0000305" key="3"/>
<gene>
    <name type="primary">NAR1</name>
    <name type="ordered locus">ECU05_0970</name>
</gene>
<protein>
    <recommendedName>
        <fullName>Cytosolic Fe-S cluster assembly factor NAR1</fullName>
    </recommendedName>
    <alternativeName>
        <fullName>Nuclear architecture-related protein 1</fullName>
    </alternativeName>
</protein>
<name>NAR1_ENCCU</name>